<gene>
    <name evidence="1" type="primary">argJ</name>
    <name type="ordered locus">MMP0897</name>
</gene>
<proteinExistence type="inferred from homology"/>
<feature type="chain" id="PRO_0000002279" description="Glutamate N-acetyltransferase alpha chain" evidence="1">
    <location>
        <begin position="1"/>
        <end position="188"/>
    </location>
</feature>
<feature type="chain" id="PRO_0000002280" description="Glutamate N-acetyltransferase beta chain" evidence="1">
    <location>
        <begin position="189"/>
        <end position="408"/>
    </location>
</feature>
<feature type="active site" description="Nucleophile" evidence="1">
    <location>
        <position position="189"/>
    </location>
</feature>
<feature type="binding site" evidence="1">
    <location>
        <position position="150"/>
    </location>
    <ligand>
        <name>substrate</name>
    </ligand>
</feature>
<feature type="binding site" evidence="1">
    <location>
        <position position="176"/>
    </location>
    <ligand>
        <name>substrate</name>
    </ligand>
</feature>
<feature type="binding site" evidence="1">
    <location>
        <position position="189"/>
    </location>
    <ligand>
        <name>substrate</name>
    </ligand>
</feature>
<feature type="binding site" evidence="1">
    <location>
        <position position="271"/>
    </location>
    <ligand>
        <name>substrate</name>
    </ligand>
</feature>
<feature type="binding site" evidence="1">
    <location>
        <position position="403"/>
    </location>
    <ligand>
        <name>substrate</name>
    </ligand>
</feature>
<feature type="binding site" evidence="1">
    <location>
        <position position="408"/>
    </location>
    <ligand>
        <name>substrate</name>
    </ligand>
</feature>
<feature type="site" description="Involved in the stabilization of negative charge on the oxyanion by the formation of the oxyanion hole" evidence="1">
    <location>
        <position position="112"/>
    </location>
</feature>
<feature type="site" description="Involved in the stabilization of negative charge on the oxyanion by the formation of the oxyanion hole" evidence="1">
    <location>
        <position position="113"/>
    </location>
</feature>
<feature type="site" description="Cleavage; by autolysis" evidence="1">
    <location>
        <begin position="188"/>
        <end position="189"/>
    </location>
</feature>
<dbReference type="EC" id="2.3.1.35" evidence="1"/>
<dbReference type="EMBL" id="BX950229">
    <property type="protein sequence ID" value="CAF30453.1"/>
    <property type="molecule type" value="Genomic_DNA"/>
</dbReference>
<dbReference type="RefSeq" id="WP_011170841.1">
    <property type="nucleotide sequence ID" value="NC_005791.1"/>
</dbReference>
<dbReference type="SMR" id="P62065"/>
<dbReference type="STRING" id="267377.MMP0897"/>
<dbReference type="MEROPS" id="T05.002"/>
<dbReference type="EnsemblBacteria" id="CAF30453">
    <property type="protein sequence ID" value="CAF30453"/>
    <property type="gene ID" value="MMP0897"/>
</dbReference>
<dbReference type="GeneID" id="2761925"/>
<dbReference type="KEGG" id="mmp:MMP0897"/>
<dbReference type="PATRIC" id="fig|267377.15.peg.923"/>
<dbReference type="eggNOG" id="arCOG04413">
    <property type="taxonomic scope" value="Archaea"/>
</dbReference>
<dbReference type="HOGENOM" id="CLU_027172_1_0_2"/>
<dbReference type="OrthoDB" id="52592at2157"/>
<dbReference type="UniPathway" id="UPA00068">
    <property type="reaction ID" value="UER00111"/>
</dbReference>
<dbReference type="Proteomes" id="UP000000590">
    <property type="component" value="Chromosome"/>
</dbReference>
<dbReference type="GO" id="GO:0005737">
    <property type="term" value="C:cytoplasm"/>
    <property type="evidence" value="ECO:0007669"/>
    <property type="project" value="UniProtKB-SubCell"/>
</dbReference>
<dbReference type="GO" id="GO:0004358">
    <property type="term" value="F:glutamate N-acetyltransferase activity"/>
    <property type="evidence" value="ECO:0007669"/>
    <property type="project" value="UniProtKB-UniRule"/>
</dbReference>
<dbReference type="GO" id="GO:0004042">
    <property type="term" value="F:L-glutamate N-acetyltransferase activity"/>
    <property type="evidence" value="ECO:0007669"/>
    <property type="project" value="UniProtKB-UniRule"/>
</dbReference>
<dbReference type="GO" id="GO:0006526">
    <property type="term" value="P:L-arginine biosynthetic process"/>
    <property type="evidence" value="ECO:0007669"/>
    <property type="project" value="UniProtKB-UniRule"/>
</dbReference>
<dbReference type="GO" id="GO:0006592">
    <property type="term" value="P:ornithine biosynthetic process"/>
    <property type="evidence" value="ECO:0007669"/>
    <property type="project" value="TreeGrafter"/>
</dbReference>
<dbReference type="CDD" id="cd02152">
    <property type="entry name" value="OAT"/>
    <property type="match status" value="1"/>
</dbReference>
<dbReference type="Gene3D" id="3.30.2330.10">
    <property type="entry name" value="arginine biosynthesis bifunctional protein suprefamily"/>
    <property type="match status" value="1"/>
</dbReference>
<dbReference type="Gene3D" id="3.10.20.340">
    <property type="entry name" value="ArgJ beta chain, C-terminal domain"/>
    <property type="match status" value="1"/>
</dbReference>
<dbReference type="Gene3D" id="3.60.70.12">
    <property type="entry name" value="L-amino peptidase D-ALA esterase/amidase"/>
    <property type="match status" value="1"/>
</dbReference>
<dbReference type="HAMAP" id="MF_01106">
    <property type="entry name" value="ArgJ"/>
    <property type="match status" value="1"/>
</dbReference>
<dbReference type="InterPro" id="IPR002813">
    <property type="entry name" value="Arg_biosynth_ArgJ"/>
</dbReference>
<dbReference type="InterPro" id="IPR016117">
    <property type="entry name" value="ArgJ-like_dom_sf"/>
</dbReference>
<dbReference type="InterPro" id="IPR042195">
    <property type="entry name" value="ArgJ_beta_C"/>
</dbReference>
<dbReference type="NCBIfam" id="TIGR00120">
    <property type="entry name" value="ArgJ"/>
    <property type="match status" value="1"/>
</dbReference>
<dbReference type="NCBIfam" id="NF003802">
    <property type="entry name" value="PRK05388.1"/>
    <property type="match status" value="1"/>
</dbReference>
<dbReference type="PANTHER" id="PTHR23100">
    <property type="entry name" value="ARGININE BIOSYNTHESIS BIFUNCTIONAL PROTEIN ARGJ"/>
    <property type="match status" value="1"/>
</dbReference>
<dbReference type="PANTHER" id="PTHR23100:SF0">
    <property type="entry name" value="ARGININE BIOSYNTHESIS BIFUNCTIONAL PROTEIN ARGJ, MITOCHONDRIAL"/>
    <property type="match status" value="1"/>
</dbReference>
<dbReference type="Pfam" id="PF01960">
    <property type="entry name" value="ArgJ"/>
    <property type="match status" value="1"/>
</dbReference>
<dbReference type="SUPFAM" id="SSF56266">
    <property type="entry name" value="DmpA/ArgJ-like"/>
    <property type="match status" value="1"/>
</dbReference>
<comment type="function">
    <text evidence="1">Catalyzes the transfer of the acetyl group from N(2)-acetylornithine to glutamate, forming N-acetylglutamate and L-ornithine.</text>
</comment>
<comment type="catalytic activity">
    <reaction evidence="1">
        <text>N(2)-acetyl-L-ornithine + L-glutamate = N-acetyl-L-glutamate + L-ornithine</text>
        <dbReference type="Rhea" id="RHEA:15349"/>
        <dbReference type="ChEBI" id="CHEBI:29985"/>
        <dbReference type="ChEBI" id="CHEBI:44337"/>
        <dbReference type="ChEBI" id="CHEBI:46911"/>
        <dbReference type="ChEBI" id="CHEBI:57805"/>
        <dbReference type="EC" id="2.3.1.35"/>
    </reaction>
</comment>
<comment type="pathway">
    <text evidence="1">Amino-acid biosynthesis; L-arginine biosynthesis; L-ornithine and N-acetyl-L-glutamate from L-glutamate and N(2)-acetyl-L-ornithine (cyclic): step 1/1.</text>
</comment>
<comment type="subunit">
    <text evidence="1">Heterotetramer of two alpha and two beta chains.</text>
</comment>
<comment type="subcellular location">
    <subcellularLocation>
        <location evidence="1">Cytoplasm</location>
    </subcellularLocation>
</comment>
<comment type="similarity">
    <text evidence="1">Belongs to the ArgJ family.</text>
</comment>
<protein>
    <recommendedName>
        <fullName evidence="1">Glutamate N-acetyltransferase</fullName>
        <ecNumber evidence="1">2.3.1.35</ecNumber>
    </recommendedName>
    <alternativeName>
        <fullName evidence="1">Ornithine acetyltransferase</fullName>
        <shortName evidence="1">OATase</shortName>
    </alternativeName>
    <alternativeName>
        <fullName evidence="1">Ornithine transacetylase</fullName>
    </alternativeName>
    <component>
        <recommendedName>
            <fullName evidence="1">Glutamate N-acetyltransferase alpha chain</fullName>
        </recommendedName>
    </component>
    <component>
        <recommendedName>
            <fullName evidence="1">Glutamate N-acetyltransferase beta chain</fullName>
        </recommendedName>
    </component>
</protein>
<accession>P62065</accession>
<name>ARGJ_METMP</name>
<evidence type="ECO:0000255" key="1">
    <source>
        <dbReference type="HAMAP-Rule" id="MF_01106"/>
    </source>
</evidence>
<keyword id="KW-0012">Acyltransferase</keyword>
<keyword id="KW-0028">Amino-acid biosynthesis</keyword>
<keyword id="KW-0055">Arginine biosynthesis</keyword>
<keyword id="KW-0068">Autocatalytic cleavage</keyword>
<keyword id="KW-0963">Cytoplasm</keyword>
<keyword id="KW-1185">Reference proteome</keyword>
<keyword id="KW-0808">Transferase</keyword>
<reference key="1">
    <citation type="journal article" date="2004" name="J. Bacteriol.">
        <title>Complete genome sequence of the genetically tractable hydrogenotrophic methanogen Methanococcus maripaludis.</title>
        <authorList>
            <person name="Hendrickson E.L."/>
            <person name="Kaul R."/>
            <person name="Zhou Y."/>
            <person name="Bovee D."/>
            <person name="Chapman P."/>
            <person name="Chung J."/>
            <person name="Conway de Macario E."/>
            <person name="Dodsworth J.A."/>
            <person name="Gillett W."/>
            <person name="Graham D.E."/>
            <person name="Hackett M."/>
            <person name="Haydock A.K."/>
            <person name="Kang A."/>
            <person name="Land M.L."/>
            <person name="Levy R."/>
            <person name="Lie T.J."/>
            <person name="Major T.A."/>
            <person name="Moore B.C."/>
            <person name="Porat I."/>
            <person name="Palmeiri A."/>
            <person name="Rouse G."/>
            <person name="Saenphimmachak C."/>
            <person name="Soell D."/>
            <person name="Van Dien S."/>
            <person name="Wang T."/>
            <person name="Whitman W.B."/>
            <person name="Xia Q."/>
            <person name="Zhang Y."/>
            <person name="Larimer F.W."/>
            <person name="Olson M.V."/>
            <person name="Leigh J.A."/>
        </authorList>
    </citation>
    <scope>NUCLEOTIDE SEQUENCE [LARGE SCALE GENOMIC DNA]</scope>
    <source>
        <strain>DSM 14266 / JCM 13030 / NBRC 101832 / S2 / LL</strain>
    </source>
</reference>
<organism>
    <name type="scientific">Methanococcus maripaludis (strain DSM 14266 / JCM 13030 / NBRC 101832 / S2 / LL)</name>
    <dbReference type="NCBI Taxonomy" id="267377"/>
    <lineage>
        <taxon>Archaea</taxon>
        <taxon>Methanobacteriati</taxon>
        <taxon>Methanobacteriota</taxon>
        <taxon>Methanomada group</taxon>
        <taxon>Methanococci</taxon>
        <taxon>Methanococcales</taxon>
        <taxon>Methanococcaceae</taxon>
        <taxon>Methanococcus</taxon>
    </lineage>
</organism>
<sequence length="408" mass="43749">MAENFVVVDGGVVAPKGFKANGHKDRKYGAALIYSEADAVAAGVFTTNKVYAHPVALSKDTLVNNNVFRAIVANSGNANCFTKGGMEDAELLVKKAAELLKIPENQVLSASTGVIGRKMPMDIISLEVERAFENITMESSNENASKAIMTTDAFPKTVAVEFEVNGKSVRIGGIAKGAGMIAPNMLHATMLGFITTDIEISKEDLTNSLQKATDESFNNAVVDGDMSTNDTVYVLANAQSGVKYTDCKEEFDHALTYVSKELAKMIVSDGEGAKKLIEATVFGAETKEDAKKASMSIVRSLLLKTAVFGADPNWGRIAAAVGYSGAEMDMNNFDIIISDISSEKQAILVKAGEQIADCGTPELKLAEEIMKEDKIKIIVDLKMGSFENTAFGCDLGYDYVKINSEYTT</sequence>